<sequence>MQPATQLQFTNHLSPNGQCILQPPPTPSLPDKMEKAPPQPQHEGLKSEEHLPQQPAAAKTVSRHIPRLRAVVESQAFKNILVDEMDMMHARAATLIQANWRGYRLRQKLISQMTAAKAIQEAWRRFNKRHILHSSKLLVKKVRAEDGNIPYHAPQQVRFQHPEENCLLSPPVMVNKETQFPSYDNLVLCRPQSSPLLKPPAAQGTPEPCVQAPHAAGVRGVAFLPHQTVTIRFPCPVSLDAKCQSCLLTRTIRSTCLVHIEGDSVKTKRVTARTNKAGVPETPLSRRYDKAVMGPSRAQTQGPVEAETPKAPFQICPGPVITKTLLQTYPVVSMTLPQTYSASTTTTTPHKTSPVPKITITKTPVQMYPGPTVMTKTAPHTCPMPTMTKIQVHSTASRTGTPRQTCRATITAKHQPQVSLLASIMKSPPQVCPGPAMAKTPPQTHPVATPAKSPLQTCLAATTSNTSSQMSPVGLTKPSRQTRLAAMITKTPAQLRSVATILKTLCLASPTVANVKAPPQVAVRGSIHDNPPKAKATMNMKQAAEAVKASSPSCLAEGKIRCLAQSRLGTGAPRAPAKLPLEAEKIKTGPQKPVKADMALKTSVAVEVAGAPSWTKVAEEGDKPSHLYVPVDVAVTLPRGQPAAPLTNASSQRHPPCLSQRPLATPLTKASSQGHLPIELTKTPSLAHLVTCLSKMHSQAHLATGAMKVQSQVPLATCLTKTQSRGQPIITKRLIPAHQAADLSSNTHSQVLLTGSKVSNQACQHLSGLSAPPWAKPEDRWTQPKPHGHVPGKTTQGGPCPAACEVQGTLVPLMAPTGHSTCHVESWGDSGATRAQPSMPSQVVPCQEDTGPVDAGVASGQSWKRVWEPARGAASWETRRNKAVVHPRQSGEPMVSMQAAEEIRILAVTTIQAGVRGYLVRRRIRVWHRRATVIQATWRGYRMRRNLAHLCRATTIIQAAWRGYSTRRDQARHRQMLHPVTWVELGGGARVMSDRSWVQDGRARTVSDHRCFQSCQAKPCSVCHSLSSRIGSPPSVVMLVGSSPRTCHTCGRTQPTRVVQGMGRGAGGPGAVSRASAYQRAVPSPRQPRRRDKAATAIQSAWRGFKIRQQMRQQQMAAKMVQATWRGHHTRSCLKSTEALLGPADPWSSSQHMHWASSQHTHWPGI</sequence>
<evidence type="ECO:0000250" key="1">
    <source>
        <dbReference type="UniProtKB" id="A0A1D5RMD1"/>
    </source>
</evidence>
<evidence type="ECO:0000250" key="2">
    <source>
        <dbReference type="UniProtKB" id="Q9H0B3"/>
    </source>
</evidence>
<evidence type="ECO:0000255" key="3">
    <source>
        <dbReference type="PROSITE-ProRule" id="PRU00116"/>
    </source>
</evidence>
<evidence type="ECO:0000256" key="4">
    <source>
        <dbReference type="SAM" id="MobiDB-lite"/>
    </source>
</evidence>
<evidence type="ECO:0000305" key="5"/>
<name>IQCN_MACFA</name>
<keyword id="KW-0217">Developmental protein</keyword>
<keyword id="KW-1185">Reference proteome</keyword>
<keyword id="KW-0677">Repeat</keyword>
<reference key="1">
    <citation type="journal article" date="2011" name="Nat. Biotechnol.">
        <title>Genome sequencing and comparison of two nonhuman primate animal models, the cynomolgus and Chinese rhesus macaques.</title>
        <authorList>
            <person name="Yan G."/>
            <person name="Zhang G."/>
            <person name="Fang X."/>
            <person name="Zhang Y."/>
            <person name="Li C."/>
            <person name="Ling F."/>
            <person name="Cooper D.N."/>
            <person name="Li Q."/>
            <person name="Li Y."/>
            <person name="van Gool A.J."/>
            <person name="Du H."/>
            <person name="Chen J."/>
            <person name="Chen R."/>
            <person name="Zhang P."/>
            <person name="Huang Z."/>
            <person name="Thompson J.R."/>
            <person name="Meng Y."/>
            <person name="Bai Y."/>
            <person name="Wang J."/>
            <person name="Zhuo M."/>
            <person name="Wang T."/>
            <person name="Huang Y."/>
            <person name="Wei L."/>
            <person name="Li J."/>
            <person name="Wang Z."/>
            <person name="Hu H."/>
            <person name="Yang P."/>
            <person name="Le L."/>
            <person name="Stenson P.D."/>
            <person name="Li B."/>
            <person name="Liu X."/>
            <person name="Ball E.V."/>
            <person name="An N."/>
            <person name="Huang Q."/>
            <person name="Zhang Y."/>
            <person name="Fan W."/>
            <person name="Zhang X."/>
            <person name="Li Y."/>
            <person name="Wang W."/>
            <person name="Katze M.G."/>
            <person name="Su B."/>
            <person name="Nielsen R."/>
            <person name="Yang H."/>
            <person name="Wang J."/>
            <person name="Wang X."/>
            <person name="Wang J."/>
        </authorList>
    </citation>
    <scope>NUCLEOTIDE SEQUENCE [LARGE SCALE GENOMIC DNA] OF 1-1155</scope>
</reference>
<reference key="2">
    <citation type="journal article" date="2002" name="BMC Genomics">
        <title>Cynomolgus monkey testicular cDNAs for discovery of novel human genes in the human genome sequence.</title>
        <authorList>
            <person name="Osada N."/>
            <person name="Hida M."/>
            <person name="Kusuda J."/>
            <person name="Tanuma R."/>
            <person name="Hirata M."/>
            <person name="Suto Y."/>
            <person name="Hirai M."/>
            <person name="Terao K."/>
            <person name="Sugano S."/>
            <person name="Hashimoto K."/>
        </authorList>
    </citation>
    <scope>NUCLEOTIDE SEQUENCE [LARGE SCALE MRNA] OF 369-1166</scope>
    <source>
        <tissue>Testis</tissue>
    </source>
</reference>
<proteinExistence type="evidence at transcript level"/>
<feature type="chain" id="PRO_0000050802" description="IQ domain-containing protein N">
    <location>
        <begin position="1"/>
        <end position="1166"/>
    </location>
</feature>
<feature type="domain" description="IQ 1" evidence="3">
    <location>
        <begin position="89"/>
        <end position="118"/>
    </location>
</feature>
<feature type="domain" description="IQ 2" evidence="3">
    <location>
        <begin position="907"/>
        <end position="932"/>
    </location>
</feature>
<feature type="domain" description="IQ 3" evidence="3">
    <location>
        <begin position="928"/>
        <end position="955"/>
    </location>
</feature>
<feature type="domain" description="IQ 4" evidence="3">
    <location>
        <begin position="952"/>
        <end position="979"/>
    </location>
</feature>
<feature type="domain" description="IQ 5" evidence="3">
    <location>
        <begin position="1091"/>
        <end position="1119"/>
    </location>
</feature>
<feature type="domain" description="IQ 6" evidence="3">
    <location>
        <begin position="1114"/>
        <end position="1143"/>
    </location>
</feature>
<feature type="region of interest" description="Disordered" evidence="4">
    <location>
        <begin position="1"/>
        <end position="56"/>
    </location>
</feature>
<feature type="region of interest" description="Disordered" evidence="4">
    <location>
        <begin position="431"/>
        <end position="450"/>
    </location>
</feature>
<feature type="region of interest" description="Disordered" evidence="4">
    <location>
        <begin position="769"/>
        <end position="797"/>
    </location>
</feature>
<feature type="region of interest" description="Disordered" evidence="4">
    <location>
        <begin position="829"/>
        <end position="848"/>
    </location>
</feature>
<feature type="region of interest" description="Disordered" evidence="4">
    <location>
        <begin position="1145"/>
        <end position="1166"/>
    </location>
</feature>
<feature type="compositionally biased region" description="Polar residues" evidence="4">
    <location>
        <begin position="1"/>
        <end position="19"/>
    </location>
</feature>
<feature type="compositionally biased region" description="Polar residues" evidence="4">
    <location>
        <begin position="1147"/>
        <end position="1166"/>
    </location>
</feature>
<feature type="sequence conflict" description="In Ref. 1; EHH62761." evidence="5" ref="1">
    <original>A</original>
    <variation>V</variation>
    <location>
        <position position="572"/>
    </location>
</feature>
<feature type="sequence conflict" description="In Ref. 1; EHH62761." evidence="5" ref="1">
    <original>L</original>
    <variation>R</variation>
    <location>
        <position position="753"/>
    </location>
</feature>
<feature type="sequence conflict" description="In Ref. 1; EHH62761." evidence="5" ref="1">
    <original>V</original>
    <variation>A</variation>
    <location>
        <position position="843"/>
    </location>
</feature>
<feature type="sequence conflict" description="In Ref. 1; EHH62761." evidence="5" ref="1">
    <location>
        <begin position="979"/>
        <end position="980"/>
    </location>
</feature>
<feature type="sequence conflict" description="In Ref. 1; EHH62761." evidence="5" ref="1">
    <original>S</original>
    <variation>G</variation>
    <location>
        <position position="1021"/>
    </location>
</feature>
<gene>
    <name type="primary">IQCN</name>
    <name type="ORF">QtsA-12219</name>
</gene>
<comment type="function">
    <text evidence="1 2">Essential for spermiogenesis and fertilization (By similarity). May be required for manchette assembly in elongating spermatids (By similarity).</text>
</comment>
<comment type="subunit">
    <text evidence="1">Interacts with calmodulin.</text>
</comment>
<comment type="sequence caution" evidence="5">
    <conflict type="erroneous initiation">
        <sequence resource="EMBL-CDS" id="BAB84026"/>
    </conflict>
    <text>Truncated N-terminus.</text>
</comment>
<comment type="sequence caution" evidence="5">
    <conflict type="erroneous gene model prediction">
        <sequence resource="EMBL-CDS" id="EHH62761"/>
    </conflict>
</comment>
<organism>
    <name type="scientific">Macaca fascicularis</name>
    <name type="common">Crab-eating macaque</name>
    <name type="synonym">Cynomolgus monkey</name>
    <dbReference type="NCBI Taxonomy" id="9541"/>
    <lineage>
        <taxon>Eukaryota</taxon>
        <taxon>Metazoa</taxon>
        <taxon>Chordata</taxon>
        <taxon>Craniata</taxon>
        <taxon>Vertebrata</taxon>
        <taxon>Euteleostomi</taxon>
        <taxon>Mammalia</taxon>
        <taxon>Eutheria</taxon>
        <taxon>Euarchontoglires</taxon>
        <taxon>Primates</taxon>
        <taxon>Haplorrhini</taxon>
        <taxon>Catarrhini</taxon>
        <taxon>Cercopithecidae</taxon>
        <taxon>Cercopithecinae</taxon>
        <taxon>Macaca</taxon>
    </lineage>
</organism>
<dbReference type="EMBL" id="JH332935">
    <property type="protein sequence ID" value="EHH62761.1"/>
    <property type="status" value="ALT_SEQ"/>
    <property type="molecule type" value="Genomic_DNA"/>
</dbReference>
<dbReference type="EMBL" id="AB066551">
    <property type="protein sequence ID" value="BAB84026.1"/>
    <property type="status" value="ALT_INIT"/>
    <property type="molecule type" value="mRNA"/>
</dbReference>
<dbReference type="STRING" id="9541.ENSMFAP00000022495"/>
<dbReference type="eggNOG" id="ENOG502SCUX">
    <property type="taxonomic scope" value="Eukaryota"/>
</dbReference>
<dbReference type="Proteomes" id="UP000009130">
    <property type="component" value="Unassembled WGS sequence"/>
</dbReference>
<dbReference type="Proteomes" id="UP000233100">
    <property type="component" value="Unplaced"/>
</dbReference>
<dbReference type="GO" id="GO:0007286">
    <property type="term" value="P:spermatid development"/>
    <property type="evidence" value="ECO:0000250"/>
    <property type="project" value="UniProtKB"/>
</dbReference>
<dbReference type="CDD" id="cd23767">
    <property type="entry name" value="IQCD"/>
    <property type="match status" value="4"/>
</dbReference>
<dbReference type="FunFam" id="1.20.5.190:FF:000021">
    <property type="entry name" value="IQ motif containing N"/>
    <property type="match status" value="1"/>
</dbReference>
<dbReference type="FunFam" id="1.20.5.190:FF:000036">
    <property type="entry name" value="IQ motif containing N"/>
    <property type="match status" value="1"/>
</dbReference>
<dbReference type="FunFam" id="1.20.5.190:FF:000041">
    <property type="entry name" value="IQ motif containing N"/>
    <property type="match status" value="1"/>
</dbReference>
<dbReference type="Gene3D" id="1.20.5.190">
    <property type="match status" value="3"/>
</dbReference>
<dbReference type="InterPro" id="IPR052318">
    <property type="entry name" value="CellDiv_DevSignal_Domain"/>
</dbReference>
<dbReference type="InterPro" id="IPR000048">
    <property type="entry name" value="IQ_motif_EF-hand-BS"/>
</dbReference>
<dbReference type="InterPro" id="IPR027417">
    <property type="entry name" value="P-loop_NTPase"/>
</dbReference>
<dbReference type="PANTHER" id="PTHR22590:SF2">
    <property type="entry name" value="IQ DOMAIN-CONTAINING PROTEIN N"/>
    <property type="match status" value="1"/>
</dbReference>
<dbReference type="PANTHER" id="PTHR22590">
    <property type="entry name" value="MYOSIN MOTOR DOMAIN-CONTAINING PROTEIN"/>
    <property type="match status" value="1"/>
</dbReference>
<dbReference type="Pfam" id="PF00612">
    <property type="entry name" value="IQ"/>
    <property type="match status" value="6"/>
</dbReference>
<dbReference type="SMART" id="SM00015">
    <property type="entry name" value="IQ"/>
    <property type="match status" value="6"/>
</dbReference>
<dbReference type="SUPFAM" id="SSF52540">
    <property type="entry name" value="P-loop containing nucleoside triphosphate hydrolases"/>
    <property type="match status" value="1"/>
</dbReference>
<dbReference type="PROSITE" id="PS50096">
    <property type="entry name" value="IQ"/>
    <property type="match status" value="6"/>
</dbReference>
<accession>Q8WNU4</accession>
<accession>G8F647</accession>
<protein>
    <recommendedName>
        <fullName>IQ domain-containing protein N</fullName>
    </recommendedName>
</protein>